<accession>Q7NSK3</accession>
<sequence length="193" mass="20814">MHIVLASTSRYRQEIIARLGLPFCAEPPVCDETPLPGETALETAVRLARVKAQSLAGKHPEALIIGSDQVALLDDKQIGKPGGFEQGVEMLKWMSGRTVVFHSALALYNTASGRLQECVGITRVTLRRLTEAQIRNYLTREPDALHCAGSAKSEGLGGALLEKVESDDPNALIGVPLFQLITMLGNEGVEVLK</sequence>
<reference key="1">
    <citation type="journal article" date="2003" name="Proc. Natl. Acad. Sci. U.S.A.">
        <title>The complete genome sequence of Chromobacterium violaceum reveals remarkable and exploitable bacterial adaptability.</title>
        <authorList>
            <person name="Vasconcelos A.T.R."/>
            <person name="de Almeida D.F."/>
            <person name="Hungria M."/>
            <person name="Guimaraes C.T."/>
            <person name="Antonio R.V."/>
            <person name="Almeida F.C."/>
            <person name="de Almeida L.G.P."/>
            <person name="de Almeida R."/>
            <person name="Alves-Gomes J.A."/>
            <person name="Andrade E.M."/>
            <person name="Araripe J."/>
            <person name="de Araujo M.F.F."/>
            <person name="Astolfi-Filho S."/>
            <person name="Azevedo V."/>
            <person name="Baptista A.J."/>
            <person name="Bataus L.A.M."/>
            <person name="Batista J.S."/>
            <person name="Belo A."/>
            <person name="van den Berg C."/>
            <person name="Bogo M."/>
            <person name="Bonatto S."/>
            <person name="Bordignon J."/>
            <person name="Brigido M.M."/>
            <person name="Brito C.A."/>
            <person name="Brocchi M."/>
            <person name="Burity H.A."/>
            <person name="Camargo A.A."/>
            <person name="Cardoso D.D.P."/>
            <person name="Carneiro N.P."/>
            <person name="Carraro D.M."/>
            <person name="Carvalho C.M.B."/>
            <person name="Cascardo J.C.M."/>
            <person name="Cavada B.S."/>
            <person name="Chueire L.M.O."/>
            <person name="Creczynski-Pasa T.B."/>
            <person name="Cunha-Junior N.C."/>
            <person name="Fagundes N."/>
            <person name="Falcao C.L."/>
            <person name="Fantinatti F."/>
            <person name="Farias I.P."/>
            <person name="Felipe M.S.S."/>
            <person name="Ferrari L.P."/>
            <person name="Ferro J.A."/>
            <person name="Ferro M.I.T."/>
            <person name="Franco G.R."/>
            <person name="Freitas N.S.A."/>
            <person name="Furlan L.R."/>
            <person name="Gazzinelli R.T."/>
            <person name="Gomes E.A."/>
            <person name="Goncalves P.R."/>
            <person name="Grangeiro T.B."/>
            <person name="Grattapaglia D."/>
            <person name="Grisard E.C."/>
            <person name="Hanna E.S."/>
            <person name="Jardim S.N."/>
            <person name="Laurino J."/>
            <person name="Leoi L.C.T."/>
            <person name="Lima L.F.A."/>
            <person name="Loureiro M.F."/>
            <person name="Lyra M.C.C.P."/>
            <person name="Madeira H.M.F."/>
            <person name="Manfio G.P."/>
            <person name="Maranhao A.Q."/>
            <person name="Martins W.S."/>
            <person name="di Mauro S.M.Z."/>
            <person name="de Medeiros S.R.B."/>
            <person name="Meissner R.V."/>
            <person name="Moreira M.A.M."/>
            <person name="Nascimento F.F."/>
            <person name="Nicolas M.F."/>
            <person name="Oliveira J.G."/>
            <person name="Oliveira S.C."/>
            <person name="Paixao R.F.C."/>
            <person name="Parente J.A."/>
            <person name="Pedrosa F.O."/>
            <person name="Pena S.D.J."/>
            <person name="Pereira J.O."/>
            <person name="Pereira M."/>
            <person name="Pinto L.S.R.C."/>
            <person name="Pinto L.S."/>
            <person name="Porto J.I.R."/>
            <person name="Potrich D.P."/>
            <person name="Ramalho-Neto C.E."/>
            <person name="Reis A.M.M."/>
            <person name="Rigo L.U."/>
            <person name="Rondinelli E."/>
            <person name="Santos E.B.P."/>
            <person name="Santos F.R."/>
            <person name="Schneider M.P.C."/>
            <person name="Seuanez H.N."/>
            <person name="Silva A.M.R."/>
            <person name="da Silva A.L.C."/>
            <person name="Silva D.W."/>
            <person name="Silva R."/>
            <person name="Simoes I.C."/>
            <person name="Simon D."/>
            <person name="Soares C.M.A."/>
            <person name="Soares R.B.A."/>
            <person name="Souza E.M."/>
            <person name="Souza K.R.L."/>
            <person name="Souza R.C."/>
            <person name="Steffens M.B.R."/>
            <person name="Steindel M."/>
            <person name="Teixeira S.R."/>
            <person name="Urmenyi T."/>
            <person name="Vettore A."/>
            <person name="Wassem R."/>
            <person name="Zaha A."/>
            <person name="Simpson A.J.G."/>
        </authorList>
    </citation>
    <scope>NUCLEOTIDE SEQUENCE [LARGE SCALE GENOMIC DNA]</scope>
    <source>
        <strain>ATCC 12472 / DSM 30191 / JCM 1249 / CCUG 213 / NBRC 12614 / NCIMB 9131 / NCTC 9757 / MK</strain>
    </source>
</reference>
<name>NTPPB_CHRVO</name>
<proteinExistence type="inferred from homology"/>
<protein>
    <recommendedName>
        <fullName evidence="1">7-methyl-GTP pyrophosphatase</fullName>
        <shortName evidence="1">m(7)GTP pyrophosphatase</shortName>
        <ecNumber evidence="1">3.6.1.-</ecNumber>
    </recommendedName>
</protein>
<evidence type="ECO:0000255" key="1">
    <source>
        <dbReference type="HAMAP-Rule" id="MF_00528"/>
    </source>
</evidence>
<organism>
    <name type="scientific">Chromobacterium violaceum (strain ATCC 12472 / DSM 30191 / JCM 1249 / CCUG 213 / NBRC 12614 / NCIMB 9131 / NCTC 9757 / MK)</name>
    <dbReference type="NCBI Taxonomy" id="243365"/>
    <lineage>
        <taxon>Bacteria</taxon>
        <taxon>Pseudomonadati</taxon>
        <taxon>Pseudomonadota</taxon>
        <taxon>Betaproteobacteria</taxon>
        <taxon>Neisseriales</taxon>
        <taxon>Chromobacteriaceae</taxon>
        <taxon>Chromobacterium</taxon>
    </lineage>
</organism>
<dbReference type="EC" id="3.6.1.-" evidence="1"/>
<dbReference type="EMBL" id="AE016825">
    <property type="protein sequence ID" value="AAQ61084.1"/>
    <property type="molecule type" value="Genomic_DNA"/>
</dbReference>
<dbReference type="RefSeq" id="WP_011136967.1">
    <property type="nucleotide sequence ID" value="NC_005085.1"/>
</dbReference>
<dbReference type="SMR" id="Q7NSK3"/>
<dbReference type="STRING" id="243365.CV_3420"/>
<dbReference type="KEGG" id="cvi:CV_3420"/>
<dbReference type="eggNOG" id="COG0424">
    <property type="taxonomic scope" value="Bacteria"/>
</dbReference>
<dbReference type="HOGENOM" id="CLU_040416_1_0_4"/>
<dbReference type="OrthoDB" id="9813694at2"/>
<dbReference type="Proteomes" id="UP000001424">
    <property type="component" value="Chromosome"/>
</dbReference>
<dbReference type="GO" id="GO:0005737">
    <property type="term" value="C:cytoplasm"/>
    <property type="evidence" value="ECO:0007669"/>
    <property type="project" value="UniProtKB-SubCell"/>
</dbReference>
<dbReference type="GO" id="GO:0047429">
    <property type="term" value="F:nucleoside triphosphate diphosphatase activity"/>
    <property type="evidence" value="ECO:0007669"/>
    <property type="project" value="InterPro"/>
</dbReference>
<dbReference type="GO" id="GO:0009117">
    <property type="term" value="P:nucleotide metabolic process"/>
    <property type="evidence" value="ECO:0007669"/>
    <property type="project" value="UniProtKB-KW"/>
</dbReference>
<dbReference type="CDD" id="cd00555">
    <property type="entry name" value="Maf"/>
    <property type="match status" value="1"/>
</dbReference>
<dbReference type="Gene3D" id="3.90.950.10">
    <property type="match status" value="1"/>
</dbReference>
<dbReference type="HAMAP" id="MF_00528">
    <property type="entry name" value="Maf"/>
    <property type="match status" value="1"/>
</dbReference>
<dbReference type="InterPro" id="IPR029001">
    <property type="entry name" value="ITPase-like_fam"/>
</dbReference>
<dbReference type="InterPro" id="IPR003697">
    <property type="entry name" value="Maf-like"/>
</dbReference>
<dbReference type="NCBIfam" id="TIGR00172">
    <property type="entry name" value="maf"/>
    <property type="match status" value="1"/>
</dbReference>
<dbReference type="PANTHER" id="PTHR43213:SF10">
    <property type="entry name" value="7-METHYL-GTP PYROPHOSPHATASE"/>
    <property type="match status" value="1"/>
</dbReference>
<dbReference type="PANTHER" id="PTHR43213">
    <property type="entry name" value="BIFUNCTIONAL DTTP/UTP PYROPHOSPHATASE/METHYLTRANSFERASE PROTEIN-RELATED"/>
    <property type="match status" value="1"/>
</dbReference>
<dbReference type="Pfam" id="PF02545">
    <property type="entry name" value="Maf"/>
    <property type="match status" value="1"/>
</dbReference>
<dbReference type="PIRSF" id="PIRSF006305">
    <property type="entry name" value="Maf"/>
    <property type="match status" value="1"/>
</dbReference>
<dbReference type="SUPFAM" id="SSF52972">
    <property type="entry name" value="ITPase-like"/>
    <property type="match status" value="1"/>
</dbReference>
<comment type="function">
    <text evidence="1">Nucleoside triphosphate pyrophosphatase that hydrolyzes 7-methyl-GTP (m(7)GTP). May have a dual role in cell division arrest and in preventing the incorporation of modified nucleotides into cellular nucleic acids.</text>
</comment>
<comment type="catalytic activity">
    <reaction evidence="1">
        <text>N(7)-methyl-GTP + H2O = N(7)-methyl-GMP + diphosphate + H(+)</text>
        <dbReference type="Rhea" id="RHEA:58744"/>
        <dbReference type="ChEBI" id="CHEBI:15377"/>
        <dbReference type="ChEBI" id="CHEBI:15378"/>
        <dbReference type="ChEBI" id="CHEBI:33019"/>
        <dbReference type="ChEBI" id="CHEBI:58285"/>
        <dbReference type="ChEBI" id="CHEBI:87133"/>
    </reaction>
</comment>
<comment type="cofactor">
    <cofactor evidence="1">
        <name>a divalent metal cation</name>
        <dbReference type="ChEBI" id="CHEBI:60240"/>
    </cofactor>
</comment>
<comment type="subcellular location">
    <subcellularLocation>
        <location evidence="1">Cytoplasm</location>
    </subcellularLocation>
</comment>
<comment type="similarity">
    <text evidence="1">Belongs to the Maf family. YceF subfamily.</text>
</comment>
<feature type="chain" id="PRO_0000123012" description="7-methyl-GTP pyrophosphatase">
    <location>
        <begin position="1"/>
        <end position="193"/>
    </location>
</feature>
<feature type="active site" description="Proton acceptor" evidence="1">
    <location>
        <position position="68"/>
    </location>
</feature>
<feature type="site" description="Important for substrate specificity" evidence="1">
    <location>
        <position position="11"/>
    </location>
</feature>
<feature type="site" description="Important for substrate specificity" evidence="1">
    <location>
        <position position="69"/>
    </location>
</feature>
<feature type="site" description="Important for substrate specificity" evidence="1">
    <location>
        <position position="154"/>
    </location>
</feature>
<keyword id="KW-0963">Cytoplasm</keyword>
<keyword id="KW-0378">Hydrolase</keyword>
<keyword id="KW-0546">Nucleotide metabolism</keyword>
<keyword id="KW-1185">Reference proteome</keyword>
<gene>
    <name type="ordered locus">CV_3420</name>
</gene>